<protein>
    <recommendedName>
        <fullName evidence="1">Exodeoxyribonuclease 7 small subunit</fullName>
        <ecNumber evidence="1">3.1.11.6</ecNumber>
    </recommendedName>
    <alternativeName>
        <fullName evidence="1">Exodeoxyribonuclease VII small subunit</fullName>
        <shortName evidence="1">Exonuclease VII small subunit</shortName>
    </alternativeName>
</protein>
<dbReference type="EC" id="3.1.11.6" evidence="1"/>
<dbReference type="EMBL" id="CP000038">
    <property type="protein sequence ID" value="AAZ87175.1"/>
    <property type="molecule type" value="Genomic_DNA"/>
</dbReference>
<dbReference type="RefSeq" id="WP_001124938.1">
    <property type="nucleotide sequence ID" value="NC_007384.1"/>
</dbReference>
<dbReference type="SMR" id="Q3Z4Y7"/>
<dbReference type="KEGG" id="ssn:SSON_0399"/>
<dbReference type="HOGENOM" id="CLU_145918_3_3_6"/>
<dbReference type="Proteomes" id="UP000002529">
    <property type="component" value="Chromosome"/>
</dbReference>
<dbReference type="GO" id="GO:0005829">
    <property type="term" value="C:cytosol"/>
    <property type="evidence" value="ECO:0007669"/>
    <property type="project" value="TreeGrafter"/>
</dbReference>
<dbReference type="GO" id="GO:0009318">
    <property type="term" value="C:exodeoxyribonuclease VII complex"/>
    <property type="evidence" value="ECO:0007669"/>
    <property type="project" value="InterPro"/>
</dbReference>
<dbReference type="GO" id="GO:0008855">
    <property type="term" value="F:exodeoxyribonuclease VII activity"/>
    <property type="evidence" value="ECO:0007669"/>
    <property type="project" value="UniProtKB-UniRule"/>
</dbReference>
<dbReference type="GO" id="GO:0006308">
    <property type="term" value="P:DNA catabolic process"/>
    <property type="evidence" value="ECO:0007669"/>
    <property type="project" value="UniProtKB-UniRule"/>
</dbReference>
<dbReference type="FunFam" id="1.10.287.1040:FF:000001">
    <property type="entry name" value="Exodeoxyribonuclease 7 small subunit"/>
    <property type="match status" value="1"/>
</dbReference>
<dbReference type="Gene3D" id="1.10.287.1040">
    <property type="entry name" value="Exonuclease VII, small subunit"/>
    <property type="match status" value="1"/>
</dbReference>
<dbReference type="HAMAP" id="MF_00337">
    <property type="entry name" value="Exonuc_7_S"/>
    <property type="match status" value="1"/>
</dbReference>
<dbReference type="InterPro" id="IPR003761">
    <property type="entry name" value="Exonuc_VII_S"/>
</dbReference>
<dbReference type="InterPro" id="IPR037004">
    <property type="entry name" value="Exonuc_VII_ssu_sf"/>
</dbReference>
<dbReference type="NCBIfam" id="NF002137">
    <property type="entry name" value="PRK00977.1-1"/>
    <property type="match status" value="1"/>
</dbReference>
<dbReference type="NCBIfam" id="NF002140">
    <property type="entry name" value="PRK00977.1-4"/>
    <property type="match status" value="1"/>
</dbReference>
<dbReference type="NCBIfam" id="TIGR01280">
    <property type="entry name" value="xseB"/>
    <property type="match status" value="1"/>
</dbReference>
<dbReference type="PANTHER" id="PTHR34137">
    <property type="entry name" value="EXODEOXYRIBONUCLEASE 7 SMALL SUBUNIT"/>
    <property type="match status" value="1"/>
</dbReference>
<dbReference type="PANTHER" id="PTHR34137:SF1">
    <property type="entry name" value="EXODEOXYRIBONUCLEASE 7 SMALL SUBUNIT"/>
    <property type="match status" value="1"/>
</dbReference>
<dbReference type="Pfam" id="PF02609">
    <property type="entry name" value="Exonuc_VII_S"/>
    <property type="match status" value="1"/>
</dbReference>
<dbReference type="PIRSF" id="PIRSF006488">
    <property type="entry name" value="Exonuc_VII_S"/>
    <property type="match status" value="1"/>
</dbReference>
<dbReference type="SUPFAM" id="SSF116842">
    <property type="entry name" value="XseB-like"/>
    <property type="match status" value="1"/>
</dbReference>
<comment type="function">
    <text evidence="1">Bidirectionally degrades single-stranded DNA into large acid-insoluble oligonucleotides, which are then degraded further into small acid-soluble oligonucleotides.</text>
</comment>
<comment type="catalytic activity">
    <reaction evidence="1">
        <text>Exonucleolytic cleavage in either 5'- to 3'- or 3'- to 5'-direction to yield nucleoside 5'-phosphates.</text>
        <dbReference type="EC" id="3.1.11.6"/>
    </reaction>
</comment>
<comment type="subunit">
    <text evidence="1">Heterooligomer composed of large and small subunits.</text>
</comment>
<comment type="subcellular location">
    <subcellularLocation>
        <location evidence="1">Cytoplasm</location>
    </subcellularLocation>
</comment>
<comment type="similarity">
    <text evidence="1">Belongs to the XseB family.</text>
</comment>
<reference key="1">
    <citation type="journal article" date="2005" name="Nucleic Acids Res.">
        <title>Genome dynamics and diversity of Shigella species, the etiologic agents of bacillary dysentery.</title>
        <authorList>
            <person name="Yang F."/>
            <person name="Yang J."/>
            <person name="Zhang X."/>
            <person name="Chen L."/>
            <person name="Jiang Y."/>
            <person name="Yan Y."/>
            <person name="Tang X."/>
            <person name="Wang J."/>
            <person name="Xiong Z."/>
            <person name="Dong J."/>
            <person name="Xue Y."/>
            <person name="Zhu Y."/>
            <person name="Xu X."/>
            <person name="Sun L."/>
            <person name="Chen S."/>
            <person name="Nie H."/>
            <person name="Peng J."/>
            <person name="Xu J."/>
            <person name="Wang Y."/>
            <person name="Yuan Z."/>
            <person name="Wen Y."/>
            <person name="Yao Z."/>
            <person name="Shen Y."/>
            <person name="Qiang B."/>
            <person name="Hou Y."/>
            <person name="Yu J."/>
            <person name="Jin Q."/>
        </authorList>
    </citation>
    <scope>NUCLEOTIDE SEQUENCE [LARGE SCALE GENOMIC DNA]</scope>
    <source>
        <strain>Ss046</strain>
    </source>
</reference>
<feature type="chain" id="PRO_0000303748" description="Exodeoxyribonuclease 7 small subunit">
    <location>
        <begin position="1"/>
        <end position="80"/>
    </location>
</feature>
<keyword id="KW-0963">Cytoplasm</keyword>
<keyword id="KW-0269">Exonuclease</keyword>
<keyword id="KW-0378">Hydrolase</keyword>
<keyword id="KW-0540">Nuclease</keyword>
<keyword id="KW-1185">Reference proteome</keyword>
<organism>
    <name type="scientific">Shigella sonnei (strain Ss046)</name>
    <dbReference type="NCBI Taxonomy" id="300269"/>
    <lineage>
        <taxon>Bacteria</taxon>
        <taxon>Pseudomonadati</taxon>
        <taxon>Pseudomonadota</taxon>
        <taxon>Gammaproteobacteria</taxon>
        <taxon>Enterobacterales</taxon>
        <taxon>Enterobacteriaceae</taxon>
        <taxon>Shigella</taxon>
    </lineage>
</organism>
<gene>
    <name evidence="1" type="primary">xseB</name>
    <name type="ordered locus">SSON_0399</name>
</gene>
<name>EX7S_SHISS</name>
<sequence>MPKKNEAPASFEKALSELEQIVTRLESGDLPLEEALNEFERGVQLARQGQAKLQQAEQRVQILLSDNEDTSLPPFTPDNE</sequence>
<accession>Q3Z4Y7</accession>
<evidence type="ECO:0000255" key="1">
    <source>
        <dbReference type="HAMAP-Rule" id="MF_00337"/>
    </source>
</evidence>
<proteinExistence type="inferred from homology"/>